<reference key="1">
    <citation type="journal article" date="2004" name="Mol. Phylogenet. Evol.">
        <title>A phylogeny of the extant Phocidae inferred from complete mitochondrial DNA coding regions.</title>
        <authorList>
            <person name="Davis C.S."/>
            <person name="Delisle I."/>
            <person name="Stirling I."/>
            <person name="Siniff D.B."/>
            <person name="Strobeck C."/>
        </authorList>
    </citation>
    <scope>NUCLEOTIDE SEQUENCE [GENOMIC DNA]</scope>
</reference>
<organism>
    <name type="scientific">Otaria byronia</name>
    <name type="common">South American sea lion</name>
    <dbReference type="NCBI Taxonomy" id="161932"/>
    <lineage>
        <taxon>Eukaryota</taxon>
        <taxon>Metazoa</taxon>
        <taxon>Chordata</taxon>
        <taxon>Craniata</taxon>
        <taxon>Vertebrata</taxon>
        <taxon>Euteleostomi</taxon>
        <taxon>Mammalia</taxon>
        <taxon>Eutheria</taxon>
        <taxon>Laurasiatheria</taxon>
        <taxon>Carnivora</taxon>
        <taxon>Caniformia</taxon>
        <taxon>Pinnipedia</taxon>
        <taxon>Otariidae</taxon>
        <taxon>Otaria</taxon>
    </lineage>
</organism>
<sequence length="379" mass="42484">MTNIRKVHPLAKIINNLLIDLPAPSNISAWWNFGSLLAVCLALQILTGLFLAMHYTSDTTTAFSSVTHICRDVNYGWIIRYMHANGASMFFICLYMHVGRGLYYGSYTLTETWNIGIILLLTVMATAFMGYVLPWGQMSFWGATVITNLLSAIPYIGTNLVEWIWGGFSVDKATLTRFFAFHFILPFVVSALVMVHLLFLHETGSNNPSGISSDSDKIPFHPYYTIKDILGTLLLILILMLLVMFSPDLLGDPDNYIPANPLSTPPHIKPEWYFLFAYAILRSIPNKLGGVLALLLSILILAIIPLLHTSKQRGMMFRPISQCLFWLLAADLLTLTWIGGQPVEHPFITIGQLASILYFTILLVLMPIAGIIENNILKW</sequence>
<accession>Q678S2</accession>
<keyword id="KW-0249">Electron transport</keyword>
<keyword id="KW-0349">Heme</keyword>
<keyword id="KW-0408">Iron</keyword>
<keyword id="KW-0472">Membrane</keyword>
<keyword id="KW-0479">Metal-binding</keyword>
<keyword id="KW-0496">Mitochondrion</keyword>
<keyword id="KW-0999">Mitochondrion inner membrane</keyword>
<keyword id="KW-0679">Respiratory chain</keyword>
<keyword id="KW-0812">Transmembrane</keyword>
<keyword id="KW-1133">Transmembrane helix</keyword>
<keyword id="KW-0813">Transport</keyword>
<keyword id="KW-0830">Ubiquinone</keyword>
<feature type="chain" id="PRO_0000247429" description="Cytochrome b">
    <location>
        <begin position="1"/>
        <end position="379"/>
    </location>
</feature>
<feature type="transmembrane region" description="Helical" evidence="2">
    <location>
        <begin position="33"/>
        <end position="53"/>
    </location>
</feature>
<feature type="transmembrane region" description="Helical" evidence="2">
    <location>
        <begin position="77"/>
        <end position="98"/>
    </location>
</feature>
<feature type="transmembrane region" description="Helical" evidence="2">
    <location>
        <begin position="113"/>
        <end position="133"/>
    </location>
</feature>
<feature type="transmembrane region" description="Helical" evidence="2">
    <location>
        <begin position="178"/>
        <end position="198"/>
    </location>
</feature>
<feature type="transmembrane region" description="Helical" evidence="2">
    <location>
        <begin position="226"/>
        <end position="246"/>
    </location>
</feature>
<feature type="transmembrane region" description="Helical" evidence="2">
    <location>
        <begin position="288"/>
        <end position="308"/>
    </location>
</feature>
<feature type="transmembrane region" description="Helical" evidence="2">
    <location>
        <begin position="320"/>
        <end position="340"/>
    </location>
</feature>
<feature type="transmembrane region" description="Helical" evidence="2">
    <location>
        <begin position="347"/>
        <end position="367"/>
    </location>
</feature>
<feature type="binding site" description="axial binding residue" evidence="2">
    <location>
        <position position="83"/>
    </location>
    <ligand>
        <name>heme b</name>
        <dbReference type="ChEBI" id="CHEBI:60344"/>
        <label>b562</label>
    </ligand>
    <ligandPart>
        <name>Fe</name>
        <dbReference type="ChEBI" id="CHEBI:18248"/>
    </ligandPart>
</feature>
<feature type="binding site" description="axial binding residue" evidence="2">
    <location>
        <position position="97"/>
    </location>
    <ligand>
        <name>heme b</name>
        <dbReference type="ChEBI" id="CHEBI:60344"/>
        <label>b566</label>
    </ligand>
    <ligandPart>
        <name>Fe</name>
        <dbReference type="ChEBI" id="CHEBI:18248"/>
    </ligandPart>
</feature>
<feature type="binding site" description="axial binding residue" evidence="2">
    <location>
        <position position="182"/>
    </location>
    <ligand>
        <name>heme b</name>
        <dbReference type="ChEBI" id="CHEBI:60344"/>
        <label>b562</label>
    </ligand>
    <ligandPart>
        <name>Fe</name>
        <dbReference type="ChEBI" id="CHEBI:18248"/>
    </ligandPart>
</feature>
<feature type="binding site" description="axial binding residue" evidence="2">
    <location>
        <position position="196"/>
    </location>
    <ligand>
        <name>heme b</name>
        <dbReference type="ChEBI" id="CHEBI:60344"/>
        <label>b566</label>
    </ligand>
    <ligandPart>
        <name>Fe</name>
        <dbReference type="ChEBI" id="CHEBI:18248"/>
    </ligandPart>
</feature>
<feature type="binding site" evidence="2">
    <location>
        <position position="201"/>
    </location>
    <ligand>
        <name>a ubiquinone</name>
        <dbReference type="ChEBI" id="CHEBI:16389"/>
    </ligand>
</feature>
<protein>
    <recommendedName>
        <fullName>Cytochrome b</fullName>
    </recommendedName>
    <alternativeName>
        <fullName>Complex III subunit 3</fullName>
    </alternativeName>
    <alternativeName>
        <fullName>Complex III subunit III</fullName>
    </alternativeName>
    <alternativeName>
        <fullName>Cytochrome b-c1 complex subunit 3</fullName>
    </alternativeName>
    <alternativeName>
        <fullName>Ubiquinol-cytochrome-c reductase complex cytochrome b subunit</fullName>
    </alternativeName>
</protein>
<evidence type="ECO:0000250" key="1"/>
<evidence type="ECO:0000250" key="2">
    <source>
        <dbReference type="UniProtKB" id="P00157"/>
    </source>
</evidence>
<evidence type="ECO:0000255" key="3">
    <source>
        <dbReference type="PROSITE-ProRule" id="PRU00967"/>
    </source>
</evidence>
<evidence type="ECO:0000255" key="4">
    <source>
        <dbReference type="PROSITE-ProRule" id="PRU00968"/>
    </source>
</evidence>
<comment type="function">
    <text evidence="2">Component of the ubiquinol-cytochrome c reductase complex (complex III or cytochrome b-c1 complex) that is part of the mitochondrial respiratory chain. The b-c1 complex mediates electron transfer from ubiquinol to cytochrome c. Contributes to the generation of a proton gradient across the mitochondrial membrane that is then used for ATP synthesis.</text>
</comment>
<comment type="cofactor">
    <cofactor evidence="2">
        <name>heme b</name>
        <dbReference type="ChEBI" id="CHEBI:60344"/>
    </cofactor>
    <text evidence="2">Binds 2 heme b groups non-covalently.</text>
</comment>
<comment type="subunit">
    <text evidence="2">The cytochrome bc1 complex contains 11 subunits: 3 respiratory subunits (MT-CYB, CYC1 and UQCRFS1), 2 core proteins (UQCRC1 and UQCRC2) and 6 low-molecular weight proteins (UQCRH/QCR6, UQCRB/QCR7, UQCRQ/QCR8, UQCR10/QCR9, UQCR11/QCR10 and a cleavage product of UQCRFS1). This cytochrome bc1 complex then forms a dimer.</text>
</comment>
<comment type="subcellular location">
    <subcellularLocation>
        <location evidence="2">Mitochondrion inner membrane</location>
        <topology evidence="2">Multi-pass membrane protein</topology>
    </subcellularLocation>
</comment>
<comment type="miscellaneous">
    <text evidence="1">Heme 1 (or BL or b562) is low-potential and absorbs at about 562 nm, and heme 2 (or BH or b566) is high-potential and absorbs at about 566 nm.</text>
</comment>
<comment type="similarity">
    <text evidence="3 4">Belongs to the cytochrome b family.</text>
</comment>
<comment type="caution">
    <text evidence="2">The full-length protein contains only eight transmembrane helices, not nine as predicted by bioinformatics tools.</text>
</comment>
<proteinExistence type="inferred from homology"/>
<name>CYB_OTABY</name>
<dbReference type="EMBL" id="AY377328">
    <property type="protein sequence ID" value="AAQ95107.1"/>
    <property type="molecule type" value="Genomic_DNA"/>
</dbReference>
<dbReference type="SMR" id="Q678S2"/>
<dbReference type="GO" id="GO:0005743">
    <property type="term" value="C:mitochondrial inner membrane"/>
    <property type="evidence" value="ECO:0007669"/>
    <property type="project" value="UniProtKB-SubCell"/>
</dbReference>
<dbReference type="GO" id="GO:0045275">
    <property type="term" value="C:respiratory chain complex III"/>
    <property type="evidence" value="ECO:0007669"/>
    <property type="project" value="InterPro"/>
</dbReference>
<dbReference type="GO" id="GO:0046872">
    <property type="term" value="F:metal ion binding"/>
    <property type="evidence" value="ECO:0007669"/>
    <property type="project" value="UniProtKB-KW"/>
</dbReference>
<dbReference type="GO" id="GO:0008121">
    <property type="term" value="F:ubiquinol-cytochrome-c reductase activity"/>
    <property type="evidence" value="ECO:0007669"/>
    <property type="project" value="InterPro"/>
</dbReference>
<dbReference type="GO" id="GO:0006122">
    <property type="term" value="P:mitochondrial electron transport, ubiquinol to cytochrome c"/>
    <property type="evidence" value="ECO:0007669"/>
    <property type="project" value="TreeGrafter"/>
</dbReference>
<dbReference type="CDD" id="cd00290">
    <property type="entry name" value="cytochrome_b_C"/>
    <property type="match status" value="1"/>
</dbReference>
<dbReference type="CDD" id="cd00284">
    <property type="entry name" value="Cytochrome_b_N"/>
    <property type="match status" value="1"/>
</dbReference>
<dbReference type="FunFam" id="1.20.810.10:FF:000002">
    <property type="entry name" value="Cytochrome b"/>
    <property type="match status" value="1"/>
</dbReference>
<dbReference type="Gene3D" id="1.20.810.10">
    <property type="entry name" value="Cytochrome Bc1 Complex, Chain C"/>
    <property type="match status" value="1"/>
</dbReference>
<dbReference type="InterPro" id="IPR005798">
    <property type="entry name" value="Cyt_b/b6_C"/>
</dbReference>
<dbReference type="InterPro" id="IPR036150">
    <property type="entry name" value="Cyt_b/b6_C_sf"/>
</dbReference>
<dbReference type="InterPro" id="IPR005797">
    <property type="entry name" value="Cyt_b/b6_N"/>
</dbReference>
<dbReference type="InterPro" id="IPR027387">
    <property type="entry name" value="Cytb/b6-like_sf"/>
</dbReference>
<dbReference type="InterPro" id="IPR030689">
    <property type="entry name" value="Cytochrome_b"/>
</dbReference>
<dbReference type="InterPro" id="IPR048260">
    <property type="entry name" value="Cytochrome_b_C_euk/bac"/>
</dbReference>
<dbReference type="InterPro" id="IPR048259">
    <property type="entry name" value="Cytochrome_b_N_euk/bac"/>
</dbReference>
<dbReference type="InterPro" id="IPR016174">
    <property type="entry name" value="Di-haem_cyt_TM"/>
</dbReference>
<dbReference type="PANTHER" id="PTHR19271">
    <property type="entry name" value="CYTOCHROME B"/>
    <property type="match status" value="1"/>
</dbReference>
<dbReference type="PANTHER" id="PTHR19271:SF16">
    <property type="entry name" value="CYTOCHROME B"/>
    <property type="match status" value="1"/>
</dbReference>
<dbReference type="Pfam" id="PF00032">
    <property type="entry name" value="Cytochrom_B_C"/>
    <property type="match status" value="1"/>
</dbReference>
<dbReference type="Pfam" id="PF00033">
    <property type="entry name" value="Cytochrome_B"/>
    <property type="match status" value="1"/>
</dbReference>
<dbReference type="PIRSF" id="PIRSF038885">
    <property type="entry name" value="COB"/>
    <property type="match status" value="1"/>
</dbReference>
<dbReference type="SUPFAM" id="SSF81648">
    <property type="entry name" value="a domain/subunit of cytochrome bc1 complex (Ubiquinol-cytochrome c reductase)"/>
    <property type="match status" value="1"/>
</dbReference>
<dbReference type="SUPFAM" id="SSF81342">
    <property type="entry name" value="Transmembrane di-heme cytochromes"/>
    <property type="match status" value="1"/>
</dbReference>
<dbReference type="PROSITE" id="PS51003">
    <property type="entry name" value="CYTB_CTER"/>
    <property type="match status" value="1"/>
</dbReference>
<dbReference type="PROSITE" id="PS51002">
    <property type="entry name" value="CYTB_NTER"/>
    <property type="match status" value="1"/>
</dbReference>
<geneLocation type="mitochondrion"/>
<gene>
    <name type="primary">MT-CYB</name>
    <name type="synonym">COB</name>
    <name type="synonym">CYTB</name>
    <name type="synonym">MTCYB</name>
</gene>